<comment type="function">
    <text evidence="1">Involved in the regulation of the intracellular balance of NAD and NADP, and is a key enzyme in the biosynthesis of NADP. Catalyzes specifically the phosphorylation on 2'-hydroxyl of the adenosine moiety of NAD to yield NADP.</text>
</comment>
<comment type="catalytic activity">
    <reaction evidence="1">
        <text>NAD(+) + ATP = ADP + NADP(+) + H(+)</text>
        <dbReference type="Rhea" id="RHEA:18629"/>
        <dbReference type="ChEBI" id="CHEBI:15378"/>
        <dbReference type="ChEBI" id="CHEBI:30616"/>
        <dbReference type="ChEBI" id="CHEBI:57540"/>
        <dbReference type="ChEBI" id="CHEBI:58349"/>
        <dbReference type="ChEBI" id="CHEBI:456216"/>
        <dbReference type="EC" id="2.7.1.23"/>
    </reaction>
</comment>
<comment type="cofactor">
    <cofactor evidence="1">
        <name>a divalent metal cation</name>
        <dbReference type="ChEBI" id="CHEBI:60240"/>
    </cofactor>
</comment>
<comment type="subcellular location">
    <subcellularLocation>
        <location evidence="1">Cytoplasm</location>
    </subcellularLocation>
</comment>
<comment type="similarity">
    <text evidence="1">Belongs to the NAD kinase family.</text>
</comment>
<evidence type="ECO:0000255" key="1">
    <source>
        <dbReference type="HAMAP-Rule" id="MF_00361"/>
    </source>
</evidence>
<dbReference type="EC" id="2.7.1.23" evidence="1"/>
<dbReference type="EMBL" id="CP000151">
    <property type="protein sequence ID" value="ABB07433.1"/>
    <property type="molecule type" value="Genomic_DNA"/>
</dbReference>
<dbReference type="RefSeq" id="WP_011351019.1">
    <property type="nucleotide sequence ID" value="NC_007510.1"/>
</dbReference>
<dbReference type="SMR" id="Q39JD3"/>
<dbReference type="GeneID" id="45093744"/>
<dbReference type="KEGG" id="bur:Bcep18194_A3832"/>
<dbReference type="PATRIC" id="fig|482957.22.peg.699"/>
<dbReference type="HOGENOM" id="CLU_008831_0_1_4"/>
<dbReference type="Proteomes" id="UP000002705">
    <property type="component" value="Chromosome 1"/>
</dbReference>
<dbReference type="GO" id="GO:0005737">
    <property type="term" value="C:cytoplasm"/>
    <property type="evidence" value="ECO:0007669"/>
    <property type="project" value="UniProtKB-SubCell"/>
</dbReference>
<dbReference type="GO" id="GO:0005524">
    <property type="term" value="F:ATP binding"/>
    <property type="evidence" value="ECO:0007669"/>
    <property type="project" value="UniProtKB-KW"/>
</dbReference>
<dbReference type="GO" id="GO:0046872">
    <property type="term" value="F:metal ion binding"/>
    <property type="evidence" value="ECO:0007669"/>
    <property type="project" value="UniProtKB-UniRule"/>
</dbReference>
<dbReference type="GO" id="GO:0051287">
    <property type="term" value="F:NAD binding"/>
    <property type="evidence" value="ECO:0007669"/>
    <property type="project" value="UniProtKB-ARBA"/>
</dbReference>
<dbReference type="GO" id="GO:0003951">
    <property type="term" value="F:NAD+ kinase activity"/>
    <property type="evidence" value="ECO:0007669"/>
    <property type="project" value="UniProtKB-UniRule"/>
</dbReference>
<dbReference type="GO" id="GO:0019674">
    <property type="term" value="P:NAD metabolic process"/>
    <property type="evidence" value="ECO:0007669"/>
    <property type="project" value="InterPro"/>
</dbReference>
<dbReference type="GO" id="GO:0006741">
    <property type="term" value="P:NADP biosynthetic process"/>
    <property type="evidence" value="ECO:0007669"/>
    <property type="project" value="UniProtKB-UniRule"/>
</dbReference>
<dbReference type="Gene3D" id="3.40.50.10330">
    <property type="entry name" value="Probable inorganic polyphosphate/atp-NAD kinase, domain 1"/>
    <property type="match status" value="1"/>
</dbReference>
<dbReference type="Gene3D" id="2.60.200.30">
    <property type="entry name" value="Probable inorganic polyphosphate/atp-NAD kinase, domain 2"/>
    <property type="match status" value="1"/>
</dbReference>
<dbReference type="HAMAP" id="MF_00361">
    <property type="entry name" value="NAD_kinase"/>
    <property type="match status" value="1"/>
</dbReference>
<dbReference type="InterPro" id="IPR017438">
    <property type="entry name" value="ATP-NAD_kinase_N"/>
</dbReference>
<dbReference type="InterPro" id="IPR017437">
    <property type="entry name" value="ATP-NAD_kinase_PpnK-typ_C"/>
</dbReference>
<dbReference type="InterPro" id="IPR016064">
    <property type="entry name" value="NAD/diacylglycerol_kinase_sf"/>
</dbReference>
<dbReference type="InterPro" id="IPR002504">
    <property type="entry name" value="NADK"/>
</dbReference>
<dbReference type="NCBIfam" id="NF002561">
    <property type="entry name" value="PRK02155.1"/>
    <property type="match status" value="1"/>
</dbReference>
<dbReference type="PANTHER" id="PTHR20275">
    <property type="entry name" value="NAD KINASE"/>
    <property type="match status" value="1"/>
</dbReference>
<dbReference type="PANTHER" id="PTHR20275:SF0">
    <property type="entry name" value="NAD KINASE"/>
    <property type="match status" value="1"/>
</dbReference>
<dbReference type="Pfam" id="PF01513">
    <property type="entry name" value="NAD_kinase"/>
    <property type="match status" value="1"/>
</dbReference>
<dbReference type="Pfam" id="PF20143">
    <property type="entry name" value="NAD_kinase_C"/>
    <property type="match status" value="1"/>
</dbReference>
<dbReference type="SUPFAM" id="SSF111331">
    <property type="entry name" value="NAD kinase/diacylglycerol kinase-like"/>
    <property type="match status" value="1"/>
</dbReference>
<name>NADK_BURL3</name>
<reference key="1">
    <citation type="submission" date="2005-10" db="EMBL/GenBank/DDBJ databases">
        <title>Complete sequence of chromosome 1 of Burkholderia sp. 383.</title>
        <authorList>
            <consortium name="US DOE Joint Genome Institute"/>
            <person name="Copeland A."/>
            <person name="Lucas S."/>
            <person name="Lapidus A."/>
            <person name="Barry K."/>
            <person name="Detter J.C."/>
            <person name="Glavina T."/>
            <person name="Hammon N."/>
            <person name="Israni S."/>
            <person name="Pitluck S."/>
            <person name="Chain P."/>
            <person name="Malfatti S."/>
            <person name="Shin M."/>
            <person name="Vergez L."/>
            <person name="Schmutz J."/>
            <person name="Larimer F."/>
            <person name="Land M."/>
            <person name="Kyrpides N."/>
            <person name="Lykidis A."/>
            <person name="Richardson P."/>
        </authorList>
    </citation>
    <scope>NUCLEOTIDE SEQUENCE [LARGE SCALE GENOMIC DNA]</scope>
    <source>
        <strain>ATCC 17760 / DSM 23089 / LMG 22485 / NCIMB 9086 / R18194 / 383</strain>
    </source>
</reference>
<accession>Q39JD3</accession>
<proteinExistence type="inferred from homology"/>
<gene>
    <name evidence="1" type="primary">nadK</name>
    <name type="ordered locus">Bcep18194_A3832</name>
</gene>
<sequence length="300" mass="32329">MKTGNQFNTVALVGRSNTPNIAEPLATLAACVAKRGFEVVFEAETAREIGITGYPALTPAEIGARADVAVVLGGDGTMLGIGRQLAPYKTPLIGINHGRLGFITDIAAADMQALVPVILSGKFEREERALLEARIMRDGEPIYHAIAFNDVVVNRSGFSGMVELRASVDGRYMYNQRSDGLIVATPTGSTAYALSSAGPILHPQLAGIVLVPIAPHALSNRPIVLPDDSKIAIQIVGGRDVNVNFDMQSFTALELNDTIEVRRSKHTVPFLHPIGYSYYATLRKKLHWNEHASNEDDKAS</sequence>
<protein>
    <recommendedName>
        <fullName evidence="1">NAD kinase</fullName>
        <ecNumber evidence="1">2.7.1.23</ecNumber>
    </recommendedName>
    <alternativeName>
        <fullName evidence="1">ATP-dependent NAD kinase</fullName>
    </alternativeName>
</protein>
<feature type="chain" id="PRO_0000229620" description="NAD kinase">
    <location>
        <begin position="1"/>
        <end position="300"/>
    </location>
</feature>
<feature type="active site" description="Proton acceptor" evidence="1">
    <location>
        <position position="75"/>
    </location>
</feature>
<feature type="binding site" evidence="1">
    <location>
        <begin position="75"/>
        <end position="76"/>
    </location>
    <ligand>
        <name>NAD(+)</name>
        <dbReference type="ChEBI" id="CHEBI:57540"/>
    </ligand>
</feature>
<feature type="binding site" evidence="1">
    <location>
        <begin position="149"/>
        <end position="150"/>
    </location>
    <ligand>
        <name>NAD(+)</name>
        <dbReference type="ChEBI" id="CHEBI:57540"/>
    </ligand>
</feature>
<feature type="binding site" evidence="1">
    <location>
        <position position="177"/>
    </location>
    <ligand>
        <name>NAD(+)</name>
        <dbReference type="ChEBI" id="CHEBI:57540"/>
    </ligand>
</feature>
<feature type="binding site" evidence="1">
    <location>
        <position position="179"/>
    </location>
    <ligand>
        <name>NAD(+)</name>
        <dbReference type="ChEBI" id="CHEBI:57540"/>
    </ligand>
</feature>
<feature type="binding site" evidence="1">
    <location>
        <begin position="190"/>
        <end position="195"/>
    </location>
    <ligand>
        <name>NAD(+)</name>
        <dbReference type="ChEBI" id="CHEBI:57540"/>
    </ligand>
</feature>
<feature type="binding site" evidence="1">
    <location>
        <position position="214"/>
    </location>
    <ligand>
        <name>NAD(+)</name>
        <dbReference type="ChEBI" id="CHEBI:57540"/>
    </ligand>
</feature>
<feature type="binding site" evidence="1">
    <location>
        <position position="248"/>
    </location>
    <ligand>
        <name>NAD(+)</name>
        <dbReference type="ChEBI" id="CHEBI:57540"/>
    </ligand>
</feature>
<organism>
    <name type="scientific">Burkholderia lata (strain ATCC 17760 / DSM 23089 / LMG 22485 / NCIMB 9086 / R18194 / 383)</name>
    <dbReference type="NCBI Taxonomy" id="482957"/>
    <lineage>
        <taxon>Bacteria</taxon>
        <taxon>Pseudomonadati</taxon>
        <taxon>Pseudomonadota</taxon>
        <taxon>Betaproteobacteria</taxon>
        <taxon>Burkholderiales</taxon>
        <taxon>Burkholderiaceae</taxon>
        <taxon>Burkholderia</taxon>
        <taxon>Burkholderia cepacia complex</taxon>
    </lineage>
</organism>
<keyword id="KW-0067">ATP-binding</keyword>
<keyword id="KW-0963">Cytoplasm</keyword>
<keyword id="KW-0418">Kinase</keyword>
<keyword id="KW-0520">NAD</keyword>
<keyword id="KW-0521">NADP</keyword>
<keyword id="KW-0547">Nucleotide-binding</keyword>
<keyword id="KW-0808">Transferase</keyword>